<dbReference type="EC" id="1.6.1.1" evidence="1"/>
<dbReference type="EMBL" id="CP000949">
    <property type="protein sequence ID" value="ACA72173.1"/>
    <property type="molecule type" value="Genomic_DNA"/>
</dbReference>
<dbReference type="SMR" id="B1J606"/>
<dbReference type="STRING" id="390235.PputW619_1668"/>
<dbReference type="KEGG" id="ppw:PputW619_1668"/>
<dbReference type="eggNOG" id="COG1249">
    <property type="taxonomic scope" value="Bacteria"/>
</dbReference>
<dbReference type="HOGENOM" id="CLU_016755_0_0_6"/>
<dbReference type="OrthoDB" id="9800167at2"/>
<dbReference type="GO" id="GO:0005829">
    <property type="term" value="C:cytosol"/>
    <property type="evidence" value="ECO:0007669"/>
    <property type="project" value="TreeGrafter"/>
</dbReference>
<dbReference type="GO" id="GO:0004148">
    <property type="term" value="F:dihydrolipoyl dehydrogenase (NADH) activity"/>
    <property type="evidence" value="ECO:0007669"/>
    <property type="project" value="TreeGrafter"/>
</dbReference>
<dbReference type="GO" id="GO:0050660">
    <property type="term" value="F:flavin adenine dinucleotide binding"/>
    <property type="evidence" value="ECO:0007669"/>
    <property type="project" value="TreeGrafter"/>
</dbReference>
<dbReference type="GO" id="GO:0003957">
    <property type="term" value="F:NAD(P)+ transhydrogenase (Si-specific) activity"/>
    <property type="evidence" value="ECO:0007669"/>
    <property type="project" value="UniProtKB-UniRule"/>
</dbReference>
<dbReference type="GO" id="GO:0006103">
    <property type="term" value="P:2-oxoglutarate metabolic process"/>
    <property type="evidence" value="ECO:0007669"/>
    <property type="project" value="TreeGrafter"/>
</dbReference>
<dbReference type="GO" id="GO:0006739">
    <property type="term" value="P:NADP metabolic process"/>
    <property type="evidence" value="ECO:0007669"/>
    <property type="project" value="UniProtKB-UniRule"/>
</dbReference>
<dbReference type="FunFam" id="3.30.390.30:FF:000002">
    <property type="entry name" value="Soluble pyridine nucleotide transhydrogenase"/>
    <property type="match status" value="1"/>
</dbReference>
<dbReference type="FunFam" id="3.50.50.60:FF:000008">
    <property type="entry name" value="Soluble pyridine nucleotide transhydrogenase"/>
    <property type="match status" value="1"/>
</dbReference>
<dbReference type="Gene3D" id="3.30.390.30">
    <property type="match status" value="1"/>
</dbReference>
<dbReference type="Gene3D" id="3.50.50.60">
    <property type="entry name" value="FAD/NAD(P)-binding domain"/>
    <property type="match status" value="2"/>
</dbReference>
<dbReference type="HAMAP" id="MF_00247">
    <property type="entry name" value="SthA"/>
    <property type="match status" value="1"/>
</dbReference>
<dbReference type="InterPro" id="IPR050151">
    <property type="entry name" value="Class-I_Pyr_Nuc-Dis_Oxidored"/>
</dbReference>
<dbReference type="InterPro" id="IPR036188">
    <property type="entry name" value="FAD/NAD-bd_sf"/>
</dbReference>
<dbReference type="InterPro" id="IPR023753">
    <property type="entry name" value="FAD/NAD-binding_dom"/>
</dbReference>
<dbReference type="InterPro" id="IPR016156">
    <property type="entry name" value="FAD/NAD-linked_Rdtase_dimer_sf"/>
</dbReference>
<dbReference type="InterPro" id="IPR001100">
    <property type="entry name" value="Pyr_nuc-diS_OxRdtase"/>
</dbReference>
<dbReference type="InterPro" id="IPR004099">
    <property type="entry name" value="Pyr_nucl-diS_OxRdtase_dimer"/>
</dbReference>
<dbReference type="InterPro" id="IPR022962">
    <property type="entry name" value="STH_gammaproteobact"/>
</dbReference>
<dbReference type="NCBIfam" id="NF003585">
    <property type="entry name" value="PRK05249.1"/>
    <property type="match status" value="1"/>
</dbReference>
<dbReference type="PANTHER" id="PTHR22912">
    <property type="entry name" value="DISULFIDE OXIDOREDUCTASE"/>
    <property type="match status" value="1"/>
</dbReference>
<dbReference type="PANTHER" id="PTHR22912:SF93">
    <property type="entry name" value="SOLUBLE PYRIDINE NUCLEOTIDE TRANSHYDROGENASE"/>
    <property type="match status" value="1"/>
</dbReference>
<dbReference type="Pfam" id="PF07992">
    <property type="entry name" value="Pyr_redox_2"/>
    <property type="match status" value="1"/>
</dbReference>
<dbReference type="Pfam" id="PF02852">
    <property type="entry name" value="Pyr_redox_dim"/>
    <property type="match status" value="1"/>
</dbReference>
<dbReference type="PIRSF" id="PIRSF000350">
    <property type="entry name" value="Mercury_reductase_MerA"/>
    <property type="match status" value="1"/>
</dbReference>
<dbReference type="PRINTS" id="PR00368">
    <property type="entry name" value="FADPNR"/>
</dbReference>
<dbReference type="PRINTS" id="PR00411">
    <property type="entry name" value="PNDRDTASEI"/>
</dbReference>
<dbReference type="SUPFAM" id="SSF51905">
    <property type="entry name" value="FAD/NAD(P)-binding domain"/>
    <property type="match status" value="1"/>
</dbReference>
<dbReference type="SUPFAM" id="SSF55424">
    <property type="entry name" value="FAD/NAD-linked reductases, dimerisation (C-terminal) domain"/>
    <property type="match status" value="1"/>
</dbReference>
<evidence type="ECO:0000255" key="1">
    <source>
        <dbReference type="HAMAP-Rule" id="MF_00247"/>
    </source>
</evidence>
<accession>B1J606</accession>
<reference key="1">
    <citation type="submission" date="2008-02" db="EMBL/GenBank/DDBJ databases">
        <title>Complete sequence of Pseudomonas putida W619.</title>
        <authorList>
            <person name="Copeland A."/>
            <person name="Lucas S."/>
            <person name="Lapidus A."/>
            <person name="Barry K."/>
            <person name="Detter J.C."/>
            <person name="Glavina del Rio T."/>
            <person name="Dalin E."/>
            <person name="Tice H."/>
            <person name="Pitluck S."/>
            <person name="Chain P."/>
            <person name="Malfatti S."/>
            <person name="Shin M."/>
            <person name="Vergez L."/>
            <person name="Schmutz J."/>
            <person name="Larimer F."/>
            <person name="Land M."/>
            <person name="Hauser L."/>
            <person name="Kyrpides N."/>
            <person name="Kim E."/>
            <person name="Taghavi S."/>
            <person name="Vangronsveld D."/>
            <person name="van der Lelie D."/>
            <person name="Richardson P."/>
        </authorList>
    </citation>
    <scope>NUCLEOTIDE SEQUENCE [LARGE SCALE GENOMIC DNA]</scope>
    <source>
        <strain>W619</strain>
    </source>
</reference>
<organism>
    <name type="scientific">Pseudomonas putida (strain W619)</name>
    <dbReference type="NCBI Taxonomy" id="390235"/>
    <lineage>
        <taxon>Bacteria</taxon>
        <taxon>Pseudomonadati</taxon>
        <taxon>Pseudomonadota</taxon>
        <taxon>Gammaproteobacteria</taxon>
        <taxon>Pseudomonadales</taxon>
        <taxon>Pseudomonadaceae</taxon>
        <taxon>Pseudomonas</taxon>
    </lineage>
</organism>
<comment type="function">
    <text evidence="1">Conversion of NADPH, generated by peripheral catabolic pathways, to NADH, which can enter the respiratory chain for energy generation.</text>
</comment>
<comment type="catalytic activity">
    <reaction evidence="1">
        <text>NAD(+) + NADPH = NADH + NADP(+)</text>
        <dbReference type="Rhea" id="RHEA:11692"/>
        <dbReference type="ChEBI" id="CHEBI:57540"/>
        <dbReference type="ChEBI" id="CHEBI:57783"/>
        <dbReference type="ChEBI" id="CHEBI:57945"/>
        <dbReference type="ChEBI" id="CHEBI:58349"/>
        <dbReference type="EC" id="1.6.1.1"/>
    </reaction>
</comment>
<comment type="cofactor">
    <cofactor evidence="1">
        <name>FAD</name>
        <dbReference type="ChEBI" id="CHEBI:57692"/>
    </cofactor>
    <text evidence="1">Binds 1 FAD per subunit.</text>
</comment>
<comment type="subcellular location">
    <subcellularLocation>
        <location evidence="1">Cytoplasm</location>
    </subcellularLocation>
</comment>
<comment type="similarity">
    <text evidence="1">Belongs to the class-I pyridine nucleotide-disulfide oxidoreductase family.</text>
</comment>
<gene>
    <name evidence="1" type="primary">sthA</name>
    <name type="ordered locus">PputW619_1668</name>
</gene>
<sequence>MAVYNYDVVVLGSGPAGEGAAMNAAKAGRKVAMVDSRRQVGGNCTHLGTIPSKALRHSVRQIMQFNTNPMFRAIGEPRWFSFPDVLKSAEKVISKQVASRTGYYARNRVDLFFGTGSFADEQTVEVVCPNGVVEKLNAKHIIIATGSRPYRPADIDFHHPRVYDSDTILSLSHTPRKLIVYGAGVIGCEYASIFSGLGVLVELVDNRGQLLSFLDSEISQALSYHFSNNNITVRHNEDYERVEGLDNGVILHLKSGKKIKADALLWCNGRTGNTDKLGLENIGIKVNSRGQIEVDEAYRTSVPNIYGAGDVIGWPSLASAAHDQGRSAAGSIVDNGSWRFVNDVPTGIYTIPEISSIGKNEQELTQAKVPYEVGKAFFKSMARAQIAGEPQGMLKILFHRETLEILGVHCFGYQASEIVHIGQAVMNQPGELNNLKYFVNTTFNYPTMAEAYRVAAYDGLNRLF</sequence>
<feature type="chain" id="PRO_1000100858" description="Soluble pyridine nucleotide transhydrogenase">
    <location>
        <begin position="1"/>
        <end position="464"/>
    </location>
</feature>
<feature type="binding site" evidence="1">
    <location>
        <begin position="35"/>
        <end position="44"/>
    </location>
    <ligand>
        <name>FAD</name>
        <dbReference type="ChEBI" id="CHEBI:57692"/>
    </ligand>
</feature>
<protein>
    <recommendedName>
        <fullName evidence="1">Soluble pyridine nucleotide transhydrogenase</fullName>
        <shortName evidence="1">STH</shortName>
        <ecNumber evidence="1">1.6.1.1</ecNumber>
    </recommendedName>
    <alternativeName>
        <fullName evidence="1">NAD(P)(+) transhydrogenase [B-specific]</fullName>
    </alternativeName>
</protein>
<proteinExistence type="inferred from homology"/>
<name>STHA_PSEPW</name>
<keyword id="KW-0963">Cytoplasm</keyword>
<keyword id="KW-0274">FAD</keyword>
<keyword id="KW-0285">Flavoprotein</keyword>
<keyword id="KW-0520">NAD</keyword>
<keyword id="KW-0521">NADP</keyword>
<keyword id="KW-0560">Oxidoreductase</keyword>